<accession>B0RP10</accession>
<proteinExistence type="inferred from homology"/>
<gene>
    <name evidence="1" type="primary">dctA</name>
    <name type="ordered locus">xcc-b100_0852</name>
</gene>
<evidence type="ECO:0000255" key="1">
    <source>
        <dbReference type="HAMAP-Rule" id="MF_01300"/>
    </source>
</evidence>
<evidence type="ECO:0000256" key="2">
    <source>
        <dbReference type="SAM" id="MobiDB-lite"/>
    </source>
</evidence>
<sequence>MHISKPAGPLPAPVPFYRQLYFQVVVAIVLGALLGHFEPAFAESLKPLGDAFIKLVKMIIAPVIFLTIVTGIAGMTHLKTVGRVFAKSMTYFLFFSTLALIVGMVVAHVVQPGAGMNINPAELDQSAVNTYVQKSHELSLVGFLMDIIPATLISAFVDGNILQVLFVAVLFGIALALVGERGRPVLSFLEALTAPVFRLVHMLMKAAPIGAFGAIAFTIGKYGVESLVNLAWLVGSFYLTSLFFVLVILGIVCRLCGFSVLKLIRYLKAELLLVLGTSSSESALPSLMEKMEKAGCEKSVVGLVVPTGYSFNLDGTNIYMTLAALFIAQATNVDLTLGQQITLLAVAMLSSKGAAGVTGAGFITLAATLSVVPDVPVAGMALILGVDRFMSECRSLTNFIGNAVATVVVSRWENALDRDQLSLALDGRAPPLQAPVPPPDAVAPVSAR</sequence>
<keyword id="KW-0997">Cell inner membrane</keyword>
<keyword id="KW-1003">Cell membrane</keyword>
<keyword id="KW-0472">Membrane</keyword>
<keyword id="KW-0769">Symport</keyword>
<keyword id="KW-0812">Transmembrane</keyword>
<keyword id="KW-1133">Transmembrane helix</keyword>
<keyword id="KW-0813">Transport</keyword>
<comment type="function">
    <text evidence="1">Responsible for the transport of dicarboxylates such as succinate, fumarate, and malate from the periplasm across the membrane.</text>
</comment>
<comment type="subcellular location">
    <subcellularLocation>
        <location evidence="1">Cell inner membrane</location>
        <topology evidence="1">Multi-pass membrane protein</topology>
    </subcellularLocation>
</comment>
<comment type="similarity">
    <text evidence="1">Belongs to the dicarboxylate/amino acid:cation symporter (DAACS) (TC 2.A.23) family.</text>
</comment>
<feature type="chain" id="PRO_1000140474" description="C4-dicarboxylate transport protein">
    <location>
        <begin position="1"/>
        <end position="448"/>
    </location>
</feature>
<feature type="transmembrane region" description="Helical" evidence="1">
    <location>
        <begin position="22"/>
        <end position="42"/>
    </location>
</feature>
<feature type="transmembrane region" description="Helical" evidence="1">
    <location>
        <begin position="55"/>
        <end position="75"/>
    </location>
</feature>
<feature type="transmembrane region" description="Helical" evidence="1">
    <location>
        <begin position="90"/>
        <end position="110"/>
    </location>
</feature>
<feature type="transmembrane region" description="Helical" evidence="1">
    <location>
        <begin position="137"/>
        <end position="157"/>
    </location>
</feature>
<feature type="transmembrane region" description="Helical" evidence="1">
    <location>
        <begin position="159"/>
        <end position="179"/>
    </location>
</feature>
<feature type="transmembrane region" description="Helical" evidence="1">
    <location>
        <begin position="199"/>
        <end position="219"/>
    </location>
</feature>
<feature type="transmembrane region" description="Helical" evidence="1">
    <location>
        <begin position="232"/>
        <end position="252"/>
    </location>
</feature>
<feature type="region of interest" description="Disordered" evidence="2">
    <location>
        <begin position="428"/>
        <end position="448"/>
    </location>
</feature>
<feature type="compositionally biased region" description="Pro residues" evidence="2">
    <location>
        <begin position="432"/>
        <end position="441"/>
    </location>
</feature>
<protein>
    <recommendedName>
        <fullName evidence="1">C4-dicarboxylate transport protein</fullName>
    </recommendedName>
</protein>
<name>DCTA_XANCB</name>
<reference key="1">
    <citation type="journal article" date="2008" name="J. Biotechnol.">
        <title>The genome of Xanthomonas campestris pv. campestris B100 and its use for the reconstruction of metabolic pathways involved in xanthan biosynthesis.</title>
        <authorList>
            <person name="Vorhoelter F.-J."/>
            <person name="Schneiker S."/>
            <person name="Goesmann A."/>
            <person name="Krause L."/>
            <person name="Bekel T."/>
            <person name="Kaiser O."/>
            <person name="Linke B."/>
            <person name="Patschkowski T."/>
            <person name="Rueckert C."/>
            <person name="Schmid J."/>
            <person name="Sidhu V.K."/>
            <person name="Sieber V."/>
            <person name="Tauch A."/>
            <person name="Watt S.A."/>
            <person name="Weisshaar B."/>
            <person name="Becker A."/>
            <person name="Niehaus K."/>
            <person name="Puehler A."/>
        </authorList>
    </citation>
    <scope>NUCLEOTIDE SEQUENCE [LARGE SCALE GENOMIC DNA]</scope>
    <source>
        <strain>B100</strain>
    </source>
</reference>
<organism>
    <name type="scientific">Xanthomonas campestris pv. campestris (strain B100)</name>
    <dbReference type="NCBI Taxonomy" id="509169"/>
    <lineage>
        <taxon>Bacteria</taxon>
        <taxon>Pseudomonadati</taxon>
        <taxon>Pseudomonadota</taxon>
        <taxon>Gammaproteobacteria</taxon>
        <taxon>Lysobacterales</taxon>
        <taxon>Lysobacteraceae</taxon>
        <taxon>Xanthomonas</taxon>
    </lineage>
</organism>
<dbReference type="EMBL" id="AM920689">
    <property type="protein sequence ID" value="CAP50195.1"/>
    <property type="molecule type" value="Genomic_DNA"/>
</dbReference>
<dbReference type="SMR" id="B0RP10"/>
<dbReference type="KEGG" id="xca:xcc-b100_0852"/>
<dbReference type="HOGENOM" id="CLU_019375_7_0_6"/>
<dbReference type="Proteomes" id="UP000001188">
    <property type="component" value="Chromosome"/>
</dbReference>
<dbReference type="GO" id="GO:0005886">
    <property type="term" value="C:plasma membrane"/>
    <property type="evidence" value="ECO:0007669"/>
    <property type="project" value="UniProtKB-SubCell"/>
</dbReference>
<dbReference type="GO" id="GO:0015138">
    <property type="term" value="F:fumarate transmembrane transporter activity"/>
    <property type="evidence" value="ECO:0007669"/>
    <property type="project" value="TreeGrafter"/>
</dbReference>
<dbReference type="GO" id="GO:0015366">
    <property type="term" value="F:malate:proton symporter activity"/>
    <property type="evidence" value="ECO:0007669"/>
    <property type="project" value="TreeGrafter"/>
</dbReference>
<dbReference type="GO" id="GO:0015141">
    <property type="term" value="F:succinate transmembrane transporter activity"/>
    <property type="evidence" value="ECO:0007669"/>
    <property type="project" value="TreeGrafter"/>
</dbReference>
<dbReference type="GO" id="GO:0070778">
    <property type="term" value="P:L-aspartate transmembrane transport"/>
    <property type="evidence" value="ECO:0007669"/>
    <property type="project" value="TreeGrafter"/>
</dbReference>
<dbReference type="FunFam" id="1.10.3860.10:FF:000001">
    <property type="entry name" value="C4-dicarboxylate transport protein"/>
    <property type="match status" value="1"/>
</dbReference>
<dbReference type="Gene3D" id="1.10.3860.10">
    <property type="entry name" value="Sodium:dicarboxylate symporter"/>
    <property type="match status" value="1"/>
</dbReference>
<dbReference type="HAMAP" id="MF_01300">
    <property type="entry name" value="C4_dicarb_transport"/>
    <property type="match status" value="1"/>
</dbReference>
<dbReference type="InterPro" id="IPR023954">
    <property type="entry name" value="C4_dicarb_transport"/>
</dbReference>
<dbReference type="InterPro" id="IPR001991">
    <property type="entry name" value="Na-dicarboxylate_symporter"/>
</dbReference>
<dbReference type="InterPro" id="IPR018107">
    <property type="entry name" value="Na-dicarboxylate_symporter_CS"/>
</dbReference>
<dbReference type="InterPro" id="IPR036458">
    <property type="entry name" value="Na:dicarbo_symporter_sf"/>
</dbReference>
<dbReference type="NCBIfam" id="NF002461">
    <property type="entry name" value="PRK01663.1"/>
    <property type="match status" value="1"/>
</dbReference>
<dbReference type="NCBIfam" id="NF009587">
    <property type="entry name" value="PRK13027.1"/>
    <property type="match status" value="1"/>
</dbReference>
<dbReference type="PANTHER" id="PTHR42865:SF1">
    <property type="entry name" value="AEROBIC C4-DICARBOXYLATE TRANSPORT PROTEIN"/>
    <property type="match status" value="1"/>
</dbReference>
<dbReference type="PANTHER" id="PTHR42865">
    <property type="entry name" value="PROTON/GLUTAMATE-ASPARTATE SYMPORTER"/>
    <property type="match status" value="1"/>
</dbReference>
<dbReference type="Pfam" id="PF00375">
    <property type="entry name" value="SDF"/>
    <property type="match status" value="1"/>
</dbReference>
<dbReference type="PRINTS" id="PR00173">
    <property type="entry name" value="EDTRNSPORT"/>
</dbReference>
<dbReference type="SUPFAM" id="SSF118215">
    <property type="entry name" value="Proton glutamate symport protein"/>
    <property type="match status" value="1"/>
</dbReference>
<dbReference type="PROSITE" id="PS00713">
    <property type="entry name" value="NA_DICARBOXYL_SYMP_1"/>
    <property type="match status" value="1"/>
</dbReference>
<dbReference type="PROSITE" id="PS00714">
    <property type="entry name" value="NA_DICARBOXYL_SYMP_2"/>
    <property type="match status" value="1"/>
</dbReference>